<dbReference type="EMBL" id="CP001185">
    <property type="protein sequence ID" value="ACJ74832.1"/>
    <property type="molecule type" value="Genomic_DNA"/>
</dbReference>
<dbReference type="RefSeq" id="WP_004103981.1">
    <property type="nucleotide sequence ID" value="NC_011653.1"/>
</dbReference>
<dbReference type="SMR" id="B7IFG8"/>
<dbReference type="STRING" id="484019.THA_332"/>
<dbReference type="KEGG" id="taf:THA_332"/>
<dbReference type="eggNOG" id="COG2052">
    <property type="taxonomic scope" value="Bacteria"/>
</dbReference>
<dbReference type="HOGENOM" id="CLU_165326_0_0_0"/>
<dbReference type="OrthoDB" id="5432174at2"/>
<dbReference type="Proteomes" id="UP000002453">
    <property type="component" value="Chromosome"/>
</dbReference>
<dbReference type="HAMAP" id="MF_01503">
    <property type="entry name" value="RemA"/>
    <property type="match status" value="1"/>
</dbReference>
<dbReference type="InterPro" id="IPR007169">
    <property type="entry name" value="RemA-like"/>
</dbReference>
<dbReference type="NCBIfam" id="NF003315">
    <property type="entry name" value="PRK04323.1"/>
    <property type="match status" value="1"/>
</dbReference>
<dbReference type="PANTHER" id="PTHR38449:SF1">
    <property type="entry name" value="REGULATORY PROTEIN SSL2874-RELATED"/>
    <property type="match status" value="1"/>
</dbReference>
<dbReference type="PANTHER" id="PTHR38449">
    <property type="entry name" value="REGULATORY PROTEIN TM_1690-RELATED"/>
    <property type="match status" value="1"/>
</dbReference>
<dbReference type="Pfam" id="PF04025">
    <property type="entry name" value="RemA-like"/>
    <property type="match status" value="1"/>
</dbReference>
<comment type="similarity">
    <text evidence="1">Belongs to the RemA family.</text>
</comment>
<accession>B7IFG8</accession>
<sequence length="94" mass="10556">MFGLINIGFGNVIAGDRIVAIVNPESAPLKRLKEDAKEEGKLIDATYGRKTRAILISDSNHIILSAIQPETIAQRFMQSFFEIEEQLDKIRRKG</sequence>
<name>Y332_THEAB</name>
<reference key="1">
    <citation type="journal article" date="2009" name="J. Bacteriol.">
        <title>The genome of Thermosipho africanus TCF52B: lateral genetic connections to the Firmicutes and Archaea.</title>
        <authorList>
            <person name="Nesboe C.L."/>
            <person name="Bapteste E."/>
            <person name="Curtis B."/>
            <person name="Dahle H."/>
            <person name="Lopez P."/>
            <person name="Macleod D."/>
            <person name="Dlutek M."/>
            <person name="Bowman S."/>
            <person name="Zhaxybayeva O."/>
            <person name="Birkeland N.-K."/>
            <person name="Doolittle W.F."/>
        </authorList>
    </citation>
    <scope>NUCLEOTIDE SEQUENCE [LARGE SCALE GENOMIC DNA]</scope>
    <source>
        <strain>TCF52B</strain>
    </source>
</reference>
<protein>
    <recommendedName>
        <fullName evidence="1">Putative regulatory protein THA_332</fullName>
    </recommendedName>
</protein>
<feature type="chain" id="PRO_1000146091" description="Putative regulatory protein THA_332">
    <location>
        <begin position="1"/>
        <end position="94"/>
    </location>
</feature>
<gene>
    <name type="ordered locus">THA_332</name>
</gene>
<evidence type="ECO:0000255" key="1">
    <source>
        <dbReference type="HAMAP-Rule" id="MF_01503"/>
    </source>
</evidence>
<proteinExistence type="inferred from homology"/>
<keyword id="KW-1185">Reference proteome</keyword>
<organism>
    <name type="scientific">Thermosipho africanus (strain TCF52B)</name>
    <dbReference type="NCBI Taxonomy" id="484019"/>
    <lineage>
        <taxon>Bacteria</taxon>
        <taxon>Thermotogati</taxon>
        <taxon>Thermotogota</taxon>
        <taxon>Thermotogae</taxon>
        <taxon>Thermotogales</taxon>
        <taxon>Fervidobacteriaceae</taxon>
        <taxon>Thermosipho</taxon>
    </lineage>
</organism>